<organism>
    <name type="scientific">Mus musculus</name>
    <name type="common">Mouse</name>
    <dbReference type="NCBI Taxonomy" id="10090"/>
    <lineage>
        <taxon>Eukaryota</taxon>
        <taxon>Metazoa</taxon>
        <taxon>Chordata</taxon>
        <taxon>Craniata</taxon>
        <taxon>Vertebrata</taxon>
        <taxon>Euteleostomi</taxon>
        <taxon>Mammalia</taxon>
        <taxon>Eutheria</taxon>
        <taxon>Euarchontoglires</taxon>
        <taxon>Glires</taxon>
        <taxon>Rodentia</taxon>
        <taxon>Myomorpha</taxon>
        <taxon>Muroidea</taxon>
        <taxon>Muridae</taxon>
        <taxon>Murinae</taxon>
        <taxon>Mus</taxon>
        <taxon>Mus</taxon>
    </lineage>
</organism>
<evidence type="ECO:0000250" key="1"/>
<evidence type="ECO:0000250" key="2">
    <source>
        <dbReference type="UniProtKB" id="P04083"/>
    </source>
</evidence>
<evidence type="ECO:0000250" key="3">
    <source>
        <dbReference type="UniProtKB" id="P07150"/>
    </source>
</evidence>
<evidence type="ECO:0000250" key="4">
    <source>
        <dbReference type="UniProtKB" id="P19619"/>
    </source>
</evidence>
<evidence type="ECO:0000250" key="5">
    <source>
        <dbReference type="UniProtKB" id="P51662"/>
    </source>
</evidence>
<evidence type="ECO:0000255" key="6">
    <source>
        <dbReference type="PROSITE-ProRule" id="PRU01245"/>
    </source>
</evidence>
<evidence type="ECO:0000269" key="7">
    <source>
    </source>
</evidence>
<evidence type="ECO:0000269" key="8">
    <source>
    </source>
</evidence>
<evidence type="ECO:0000269" key="9">
    <source>
    </source>
</evidence>
<evidence type="ECO:0000269" key="10">
    <source>
    </source>
</evidence>
<evidence type="ECO:0000269" key="11">
    <source>
    </source>
</evidence>
<evidence type="ECO:0000269" key="12">
    <source>
    </source>
</evidence>
<evidence type="ECO:0000269" key="13">
    <source>
    </source>
</evidence>
<evidence type="ECO:0000269" key="14">
    <source>
    </source>
</evidence>
<evidence type="ECO:0000269" key="15">
    <source>
    </source>
</evidence>
<evidence type="ECO:0000303" key="16">
    <source>
    </source>
</evidence>
<evidence type="ECO:0000305" key="17"/>
<evidence type="ECO:0000305" key="18">
    <source>
    </source>
</evidence>
<evidence type="ECO:0007744" key="19">
    <source>
    </source>
</evidence>
<evidence type="ECO:0007744" key="20">
    <source>
    </source>
</evidence>
<feature type="initiator methionine" description="Removed" evidence="2">
    <location>
        <position position="1"/>
    </location>
</feature>
<feature type="chain" id="PRO_0000067461" description="Annexin A1">
    <location>
        <begin position="2"/>
        <end position="346"/>
    </location>
</feature>
<feature type="peptide" id="PRO_0000454557" description="Annexin Ac2-26" evidence="2">
    <location>
        <begin position="2"/>
        <end position="26"/>
    </location>
</feature>
<feature type="repeat" description="Annexin 1" evidence="6">
    <location>
        <begin position="42"/>
        <end position="113"/>
    </location>
</feature>
<feature type="repeat" description="Annexin 2" evidence="6">
    <location>
        <begin position="114"/>
        <end position="185"/>
    </location>
</feature>
<feature type="repeat" description="Annexin 3" evidence="6">
    <location>
        <begin position="197"/>
        <end position="269"/>
    </location>
</feature>
<feature type="repeat" description="Annexin 4" evidence="6">
    <location>
        <begin position="273"/>
        <end position="344"/>
    </location>
</feature>
<feature type="binding site" evidence="4">
    <location>
        <position position="59"/>
    </location>
    <ligand>
        <name>Ca(2+)</name>
        <dbReference type="ChEBI" id="CHEBI:29108"/>
        <label>1</label>
    </ligand>
</feature>
<feature type="binding site" evidence="4">
    <location>
        <position position="60"/>
    </location>
    <ligand>
        <name>Ca(2+)</name>
        <dbReference type="ChEBI" id="CHEBI:29108"/>
        <label>1</label>
    </ligand>
</feature>
<feature type="binding site" evidence="4">
    <location>
        <position position="62"/>
    </location>
    <ligand>
        <name>Ca(2+)</name>
        <dbReference type="ChEBI" id="CHEBI:29108"/>
        <label>1</label>
    </ligand>
</feature>
<feature type="binding site" evidence="4">
    <location>
        <position position="97"/>
    </location>
    <ligand>
        <name>Ca(2+)</name>
        <dbReference type="ChEBI" id="CHEBI:29108"/>
        <label>2</label>
    </ligand>
</feature>
<feature type="binding site" evidence="4">
    <location>
        <position position="100"/>
    </location>
    <ligand>
        <name>Ca(2+)</name>
        <dbReference type="ChEBI" id="CHEBI:29108"/>
        <label>2</label>
    </ligand>
</feature>
<feature type="binding site" evidence="4">
    <location>
        <position position="105"/>
    </location>
    <ligand>
        <name>Ca(2+)</name>
        <dbReference type="ChEBI" id="CHEBI:29108"/>
        <label>2</label>
    </ligand>
</feature>
<feature type="binding site" evidence="4">
    <location>
        <position position="127"/>
    </location>
    <ligand>
        <name>Ca(2+)</name>
        <dbReference type="ChEBI" id="CHEBI:29108"/>
        <label>3</label>
    </ligand>
</feature>
<feature type="binding site" evidence="4">
    <location>
        <position position="129"/>
    </location>
    <ligand>
        <name>Ca(2+)</name>
        <dbReference type="ChEBI" id="CHEBI:29108"/>
        <label>3</label>
    </ligand>
</feature>
<feature type="binding site" evidence="4">
    <location>
        <position position="131"/>
    </location>
    <ligand>
        <name>Ca(2+)</name>
        <dbReference type="ChEBI" id="CHEBI:29108"/>
        <label>3</label>
    </ligand>
</feature>
<feature type="binding site" evidence="4">
    <location>
        <position position="132"/>
    </location>
    <ligand>
        <name>Ca(2+)</name>
        <dbReference type="ChEBI" id="CHEBI:29108"/>
        <label>4</label>
    </ligand>
</feature>
<feature type="binding site" evidence="4">
    <location>
        <position position="134"/>
    </location>
    <ligand>
        <name>Ca(2+)</name>
        <dbReference type="ChEBI" id="CHEBI:29108"/>
        <label>4</label>
    </ligand>
</feature>
<feature type="binding site" evidence="4">
    <location>
        <position position="171"/>
    </location>
    <ligand>
        <name>Ca(2+)</name>
        <dbReference type="ChEBI" id="CHEBI:29108"/>
        <label>3</label>
    </ligand>
</feature>
<feature type="binding site" evidence="4">
    <location>
        <position position="210"/>
    </location>
    <ligand>
        <name>Ca(2+)</name>
        <dbReference type="ChEBI" id="CHEBI:29108"/>
        <label>5</label>
    </ligand>
</feature>
<feature type="binding site" evidence="4">
    <location>
        <position position="213"/>
    </location>
    <ligand>
        <name>Ca(2+)</name>
        <dbReference type="ChEBI" id="CHEBI:29108"/>
        <label>5</label>
    </ligand>
</feature>
<feature type="binding site" evidence="4">
    <location>
        <position position="215"/>
    </location>
    <ligand>
        <name>Ca(2+)</name>
        <dbReference type="ChEBI" id="CHEBI:29108"/>
        <label>5</label>
    </ligand>
</feature>
<feature type="binding site" evidence="4">
    <location>
        <position position="253"/>
    </location>
    <ligand>
        <name>Ca(2+)</name>
        <dbReference type="ChEBI" id="CHEBI:29108"/>
        <label>6</label>
    </ligand>
</feature>
<feature type="binding site" evidence="4">
    <location>
        <position position="255"/>
    </location>
    <ligand>
        <name>Ca(2+)</name>
        <dbReference type="ChEBI" id="CHEBI:29108"/>
        <label>5</label>
    </ligand>
</feature>
<feature type="binding site" evidence="4">
    <location>
        <position position="256"/>
    </location>
    <ligand>
        <name>Ca(2+)</name>
        <dbReference type="ChEBI" id="CHEBI:29108"/>
        <label>6</label>
    </ligand>
</feature>
<feature type="binding site" evidence="4">
    <location>
        <position position="261"/>
    </location>
    <ligand>
        <name>Ca(2+)</name>
        <dbReference type="ChEBI" id="CHEBI:29108"/>
        <label>6</label>
    </ligand>
</feature>
<feature type="binding site" evidence="4">
    <location>
        <position position="286"/>
    </location>
    <ligand>
        <name>Ca(2+)</name>
        <dbReference type="ChEBI" id="CHEBI:29108"/>
        <label>7</label>
    </ligand>
</feature>
<feature type="binding site" evidence="4">
    <location>
        <position position="288"/>
    </location>
    <ligand>
        <name>Ca(2+)</name>
        <dbReference type="ChEBI" id="CHEBI:29108"/>
        <label>7</label>
    </ligand>
</feature>
<feature type="binding site" evidence="4">
    <location>
        <position position="290"/>
    </location>
    <ligand>
        <name>Ca(2+)</name>
        <dbReference type="ChEBI" id="CHEBI:29108"/>
        <label>7</label>
    </ligand>
</feature>
<feature type="binding site" evidence="4">
    <location>
        <position position="328"/>
    </location>
    <ligand>
        <name>Ca(2+)</name>
        <dbReference type="ChEBI" id="CHEBI:29108"/>
        <label>8</label>
    </ligand>
</feature>
<feature type="binding site" evidence="4">
    <location>
        <position position="330"/>
    </location>
    <ligand>
        <name>Ca(2+)</name>
        <dbReference type="ChEBI" id="CHEBI:29108"/>
        <label>7</label>
    </ligand>
</feature>
<feature type="binding site" evidence="4">
    <location>
        <position position="331"/>
    </location>
    <ligand>
        <name>Ca(2+)</name>
        <dbReference type="ChEBI" id="CHEBI:29108"/>
        <label>8</label>
    </ligand>
</feature>
<feature type="binding site" evidence="4">
    <location>
        <position position="336"/>
    </location>
    <ligand>
        <name>Ca(2+)</name>
        <dbReference type="ChEBI" id="CHEBI:29108"/>
        <label>8</label>
    </ligand>
</feature>
<feature type="site" description="Cleavage; by CTSG" evidence="2">
    <location>
        <begin position="26"/>
        <end position="27"/>
    </location>
</feature>
<feature type="modified residue" description="N-acetylalanine" evidence="2">
    <location>
        <position position="2"/>
    </location>
</feature>
<feature type="modified residue" description="Phosphoserine; by TRPM7" evidence="2">
    <location>
        <position position="5"/>
    </location>
</feature>
<feature type="modified residue" description="Phosphotyrosine" evidence="19">
    <location>
        <position position="21"/>
    </location>
</feature>
<feature type="modified residue" description="Phosphoserine; by PKC" evidence="2">
    <location>
        <position position="27"/>
    </location>
</feature>
<feature type="modified residue" description="Phosphoserine" evidence="2">
    <location>
        <position position="34"/>
    </location>
</feature>
<feature type="modified residue" description="Phosphoserine" evidence="2">
    <location>
        <position position="37"/>
    </location>
</feature>
<feature type="modified residue" description="N6-acetyllysine" evidence="20">
    <location>
        <position position="58"/>
    </location>
</feature>
<feature type="modified residue" description="Phosphothreonine" evidence="2">
    <location>
        <position position="136"/>
    </location>
</feature>
<feature type="modified residue" description="N6-acetyllysine" evidence="20">
    <location>
        <position position="312"/>
    </location>
</feature>
<feature type="disulfide bond" evidence="4">
    <location>
        <begin position="324"/>
        <end position="343"/>
    </location>
</feature>
<feature type="cross-link" description="Isoglutamyl lysine isopeptide (Gln-Lys) (interchain with K-?)" evidence="1">
    <location>
        <position position="19"/>
    </location>
</feature>
<feature type="cross-link" description="Glycyl lysine isopeptide (Lys-Gly) (interchain with G-Cter in SUMO1); alternate" evidence="2">
    <location>
        <position position="214"/>
    </location>
</feature>
<feature type="cross-link" description="Glycyl lysine isopeptide (Lys-Gly) (interchain with G-Cter in SUMO2); alternate" evidence="2">
    <location>
        <position position="214"/>
    </location>
</feature>
<feature type="cross-link" description="Glycyl lysine isopeptide (Lys-Gly) (interchain with G-Cter in SUMO1)" evidence="18">
    <location>
        <position position="257"/>
    </location>
</feature>
<feature type="cross-link" description="Glycyl lysine isopeptide (Lys-Gly) (interchain with G-Cter in SUMO1)" evidence="2">
    <location>
        <position position="332"/>
    </location>
</feature>
<feature type="mutagenesis site" description="Strongly decreased sumoylation." evidence="13">
    <original>K</original>
    <variation>R</variation>
    <location>
        <position position="257"/>
    </location>
</feature>
<feature type="sequence conflict" description="In Ref. 4; AAA39420." evidence="17" ref="4">
    <original>QQ</original>
    <variation>PR</variation>
    <location>
        <begin position="78"/>
        <end position="79"/>
    </location>
</feature>
<feature type="sequence conflict" description="In Ref. 2; AAA39437." evidence="17" ref="2">
    <original>R</original>
    <variation>I</variation>
    <location>
        <position position="212"/>
    </location>
</feature>
<feature type="sequence conflict" description="In Ref. 4; AAA39420." evidence="17" ref="4">
    <original>T</original>
    <variation>H</variation>
    <location>
        <position position="222"/>
    </location>
</feature>
<feature type="sequence conflict" description="In Ref. 4; AAA39420." evidence="17" ref="4">
    <original>T</original>
    <variation>H</variation>
    <location>
        <position position="274"/>
    </location>
</feature>
<comment type="function">
    <text evidence="2 4 7 10 12 15">Plays important roles in the innate immune response as effector of glucocorticoid-mediated responses and regulator of the inflammatory process. Has anti-inflammatory activity (PubMed:12475898). Plays a role in glucocorticoid-mediated down-regulation of the early phase of the inflammatory response (PubMed:12475898). Contributes to the adaptive immune response by enhancing signaling cascades that are triggered by T-cell activation, regulates differentiation and proliferation of activated T-cells (PubMed:17948261). Promotes the differentiation of T-cells into Th1 cells and negatively regulates differentiation into Th2 cells (PubMed:17948261). Has no effect on unstimulated T-cells. Negatively regulates hormone exocytosis via activation of the formyl peptide receptors and reorganization of the actin cytoskeleton (By similarity). Has high affinity for Ca(2+) and can bind up to eight Ca(2+) ions (By similarity). Displays Ca(2+)-dependent binding to phospholipid membranes (By similarity). Plays a role in the formation of phagocytic cups and phagosomes (PubMed:21245195). Plays a role in phagocytosis by mediating the Ca(2+)-dependent interaction between phagosomes and the actin cytoskeleton (PubMed:21245195).</text>
</comment>
<comment type="function">
    <molecule>Annexin Ac2-26</molecule>
    <text evidence="2">Functions at least in part by activating the formyl peptide receptors and downstream signaling cascades. Promotes chemotaxis of granulocytes and monocytes via activation of the formyl peptide receptors. Promotes rearrangement of the actin cytoskeleton, cell polarization and cell migration. Promotes resolution of inflammation and wound healing. Acts via neutrophil N-formyl peptide receptors to enhance the release of CXCL2.</text>
</comment>
<comment type="subunit">
    <text evidence="2 4 8">Homodimer; non-covalently linked (By similarity). Homodimer; linked by transglutamylation. Homodimers linked by transglutamylation are observed in placenta, but not in other tissues. Interacts with S100A11. Heterotetramer, formed by two molecules each of S100A11 and ANXA1 (By similarity). Interacts with DYSF (PubMed:14506282). Interacts with EGFR (By similarity).</text>
</comment>
<comment type="interaction">
    <interactant intactId="EBI-647848">
        <id>P10107</id>
    </interactant>
    <interactant intactId="EBI-27033185">
        <id>A0A0F6B5H5</id>
        <label>pipB2</label>
    </interactant>
    <organismsDiffer>true</organismsDiffer>
    <experiments>5</experiments>
</comment>
<comment type="subcellular location">
    <subcellularLocation>
        <location evidence="3">Nucleus</location>
    </subcellularLocation>
    <subcellularLocation>
        <location evidence="11 12">Cytoplasm</location>
    </subcellularLocation>
    <subcellularLocation>
        <location evidence="9">Cell projection</location>
        <location evidence="9">Cilium</location>
    </subcellularLocation>
    <subcellularLocation>
        <location evidence="5">Basolateral cell membrane</location>
    </subcellularLocation>
    <subcellularLocation>
        <location evidence="11">Lateral cell membrane</location>
    </subcellularLocation>
    <subcellularLocation>
        <location evidence="8 12">Cell membrane</location>
        <topology evidence="17">Peripheral membrane protein</topology>
    </subcellularLocation>
    <subcellularLocation>
        <location evidence="9 11">Apical cell membrane</location>
    </subcellularLocation>
    <subcellularLocation>
        <location evidence="13">Membrane</location>
        <topology evidence="13">Peripheral membrane protein</topology>
    </subcellularLocation>
    <subcellularLocation>
        <location evidence="4">Early endosome</location>
    </subcellularLocation>
    <subcellularLocation>
        <location evidence="4">Cytoplasmic vesicle membrane</location>
        <topology evidence="4">Peripheral membrane protein</topology>
    </subcellularLocation>
    <subcellularLocation>
        <location evidence="3">Endosome membrane</location>
        <topology evidence="3">Peripheral membrane protein</topology>
    </subcellularLocation>
    <subcellularLocation>
        <location evidence="15">Secreted</location>
    </subcellularLocation>
    <subcellularLocation>
        <location evidence="2">Secreted</location>
        <location evidence="2">Extracellular space</location>
    </subcellularLocation>
    <subcellularLocation>
        <location evidence="2">Cell membrane</location>
        <topology evidence="2">Peripheral membrane protein</topology>
        <orientation evidence="2">Extracellular side</orientation>
    </subcellularLocation>
    <subcellularLocation>
        <location evidence="15">Secreted</location>
        <location evidence="15">Extracellular exosome</location>
    </subcellularLocation>
    <subcellularLocation>
        <location evidence="15">Cytoplasmic vesicle</location>
        <location evidence="15">Secretory vesicle lumen</location>
    </subcellularLocation>
    <subcellularLocation>
        <location evidence="12">Cell projection</location>
        <location evidence="12">Phagocytic cup</location>
    </subcellularLocation>
    <text evidence="2 15">Colocalizes with actin fibers at phagocytic cups (PubMed:21245195). Secreted, at least in part via exosomes and other secretory vesicles. Detected in exosomes and other extracellular vesicles (PubMed:25664854). Secretion is increased in response to wounding and inflammation (PubMed:25664854). Detected in gelatinase granules in resting neutrophils. Neutrophil adhesion to endothelial cells stimulates secretion via gelatinase granules, but foreign particle phagocytosis has no effect. Displays calcium-dependent binding to phospholipid membranes (By similarity).</text>
</comment>
<comment type="tissue specificity">
    <text evidence="7 8 9 13">Detected in lung (PubMed:12475898, PubMed:17384087). Detected at the apical membrane of airway epithelial cells (PubMed:17384087). Detected in intestinal epithelial cells (PubMed:18802107). Detected in skeletal muscle (PubMed:14506282). Detected in prostate (PubMed:23727357). Detected in thymus (at protein level) (PubMed:12475898). Detected in stomach, lung, spleen, ovary and uterus, and at lower levels in kidney, thymus and heart (PubMed:12475898).</text>
</comment>
<comment type="induction">
    <text evidence="14">Up-regulated by the synthetic glucocorticoid fluocinolone acetonide.</text>
</comment>
<comment type="domain">
    <text evidence="4">The full-length protein can bind eight Ca(2+) ions via the annexin repeats. Calcium binding causes a major conformation change that modifies dimer contacts and leads to surface exposure of the N-terminal phosphorylation sites; in the absence of Ca(2+), these sites are buried in the interior of the protein core. The N-terminal region becomes disordered in response to calcium-binding.</text>
</comment>
<comment type="PTM">
    <text evidence="2">Phosphorylated by protein kinase C, EGFR and TRPM7. Phosphorylated in response to EGF treatment.</text>
</comment>
<comment type="PTM">
    <text evidence="13">Sumoylated.</text>
</comment>
<comment type="PTM">
    <text evidence="2">Proteolytically cleaved by cathepsin CTSG to release the active N-terminal peptide Ac2-26.</text>
</comment>
<comment type="disruption phenotype">
    <text evidence="7 10 11">Mice are born at the expected Mendelian rate, appear healthy and are fertile, but tend to die already after about one year. Mutant mice display an increased inflammatory response during zymosan-induced peritonitis, with increased blood leukocyte migration and increased production of IL1B. In mutant mice, glucocorticoid-mediated down-regulation of the early phase of the inflammatory response is abolished, but there is no effect on glucocorticoid-mediated down-regulation of later phases of the inflammatory response. Peritoneal lavage macrophages from mutant mice display decreased phagocytosis. Besides, glucocorticoid-mediated inhibition of phagocytosis is abolished (PubMed:12475898). Mutant mice display increased susceptibility to dextran sulfate sodium (DSS)-induced colitis with increased mucosal injury, slower recovery and increased morbidity (PubMed:18802107). Mutant mice have an exacerbated allergic response after exposure to ovalbumin (PubMed:17948261). T-cells from mutant mice show skewed differentiation into Th1 and Th2 cells with increased differentiation into Th2 cells and decreased differentiation into Th1 cells (PubMed:17948261).</text>
</comment>
<comment type="miscellaneous">
    <text evidence="17">Was originally identified as calcium and phospholipid binding protein that displays Ca(2+)-dependent binding to phospholipid membranes and can promote membrane aggregation in vitro. Was initially identified as inhibitor of phospholipase A2 activity (in vitro). Inhibition of phospholipase activity is mediated via its phospholipid binding activity that limits the access of phospholipase to its substrates.</text>
</comment>
<comment type="similarity">
    <text evidence="6 17">Belongs to the annexin family.</text>
</comment>
<protein>
    <recommendedName>
        <fullName>Annexin A1</fullName>
    </recommendedName>
    <alternativeName>
        <fullName>Annexin I</fullName>
    </alternativeName>
    <alternativeName>
        <fullName>Annexin-1</fullName>
    </alternativeName>
    <alternativeName>
        <fullName>Calpactin II</fullName>
    </alternativeName>
    <alternativeName>
        <fullName>Calpactin-2</fullName>
    </alternativeName>
    <alternativeName>
        <fullName>Chromobindin-9</fullName>
    </alternativeName>
    <alternativeName>
        <fullName evidence="16">Lipocortin I</fullName>
    </alternativeName>
    <alternativeName>
        <fullName>Phospholipase A2 inhibitory protein</fullName>
    </alternativeName>
    <alternativeName>
        <fullName>p35</fullName>
    </alternativeName>
    <component>
        <recommendedName>
            <fullName evidence="2">Annexin Ac2-26</fullName>
        </recommendedName>
    </component>
</protein>
<proteinExistence type="evidence at protein level"/>
<sequence length="346" mass="38734">MAMVSEFLKQARFLENQEQEYVQAVKSYKGGPGSAVSPYPSFNVSSDVAALHKAIMVKGVDEATIIDILTKRTNAQRQQIKAAYLQENGKPLDEVLRKALTGHLEEVVLAMLKTPAQFDADELRGAMKGLGTDEDTLIEILTTRSNEQIREINRVYREELKRDLAKDITSDTSGDFRKALLALAKGDRCQDLSVNQDLADTDARALYEAGERRKGTDVNVFTTILTSRSFPHLRRVFQNYGKYSQHDMNKALDLELKGDIEKCLTTIVKCATSTPAFFAEKLYEAMKGAGTRHKALIRIMVSRSEIDMNEIKVFYQKKYGISLCQAILDETKGDYEKILVALCGGN</sequence>
<name>ANXA1_MOUSE</name>
<dbReference type="EMBL" id="X07486">
    <property type="protein sequence ID" value="CAA30371.1"/>
    <property type="molecule type" value="mRNA"/>
</dbReference>
<dbReference type="EMBL" id="M69260">
    <property type="protein sequence ID" value="AAA39437.1"/>
    <property type="molecule type" value="Genomic_DNA"/>
</dbReference>
<dbReference type="EMBL" id="M69250">
    <property type="protein sequence ID" value="AAA39437.1"/>
    <property type="status" value="JOINED"/>
    <property type="molecule type" value="Genomic_DNA"/>
</dbReference>
<dbReference type="EMBL" id="M69251">
    <property type="protein sequence ID" value="AAA39437.1"/>
    <property type="status" value="JOINED"/>
    <property type="molecule type" value="Genomic_DNA"/>
</dbReference>
<dbReference type="EMBL" id="M69252">
    <property type="protein sequence ID" value="AAA39437.1"/>
    <property type="status" value="JOINED"/>
    <property type="molecule type" value="Genomic_DNA"/>
</dbReference>
<dbReference type="EMBL" id="M69253">
    <property type="protein sequence ID" value="AAA39437.1"/>
    <property type="status" value="JOINED"/>
    <property type="molecule type" value="Genomic_DNA"/>
</dbReference>
<dbReference type="EMBL" id="M69254">
    <property type="protein sequence ID" value="AAA39437.1"/>
    <property type="status" value="JOINED"/>
    <property type="molecule type" value="Genomic_DNA"/>
</dbReference>
<dbReference type="EMBL" id="M69255">
    <property type="protein sequence ID" value="AAA39437.1"/>
    <property type="status" value="JOINED"/>
    <property type="molecule type" value="Genomic_DNA"/>
</dbReference>
<dbReference type="EMBL" id="M69256">
    <property type="protein sequence ID" value="AAA39437.1"/>
    <property type="status" value="JOINED"/>
    <property type="molecule type" value="Genomic_DNA"/>
</dbReference>
<dbReference type="EMBL" id="M69257">
    <property type="protein sequence ID" value="AAA39437.1"/>
    <property type="status" value="JOINED"/>
    <property type="molecule type" value="Genomic_DNA"/>
</dbReference>
<dbReference type="EMBL" id="M69258">
    <property type="protein sequence ID" value="AAA39437.1"/>
    <property type="status" value="JOINED"/>
    <property type="molecule type" value="Genomic_DNA"/>
</dbReference>
<dbReference type="EMBL" id="M69259">
    <property type="protein sequence ID" value="AAA39437.1"/>
    <property type="status" value="JOINED"/>
    <property type="molecule type" value="Genomic_DNA"/>
</dbReference>
<dbReference type="EMBL" id="BC002289">
    <property type="protein sequence ID" value="AAH02289.1"/>
    <property type="molecule type" value="mRNA"/>
</dbReference>
<dbReference type="EMBL" id="BC004594">
    <property type="protein sequence ID" value="AAH04594.1"/>
    <property type="molecule type" value="mRNA"/>
</dbReference>
<dbReference type="EMBL" id="M24554">
    <property type="protein sequence ID" value="AAA39420.1"/>
    <property type="molecule type" value="mRNA"/>
</dbReference>
<dbReference type="CCDS" id="CCDS29692.1"/>
<dbReference type="PIR" id="S02181">
    <property type="entry name" value="LUMS1"/>
</dbReference>
<dbReference type="RefSeq" id="NP_034860.2">
    <property type="nucleotide sequence ID" value="NM_010730.2"/>
</dbReference>
<dbReference type="SMR" id="P10107"/>
<dbReference type="BioGRID" id="201194">
    <property type="interactions" value="27"/>
</dbReference>
<dbReference type="FunCoup" id="P10107">
    <property type="interactions" value="429"/>
</dbReference>
<dbReference type="IntAct" id="P10107">
    <property type="interactions" value="7"/>
</dbReference>
<dbReference type="MINT" id="P10107"/>
<dbReference type="STRING" id="10090.ENSMUSP00000025561"/>
<dbReference type="GlyGen" id="P10107">
    <property type="glycosylation" value="1 site, 1 O-linked glycan (1 site)"/>
</dbReference>
<dbReference type="iPTMnet" id="P10107"/>
<dbReference type="PhosphoSitePlus" id="P10107"/>
<dbReference type="SwissPalm" id="P10107"/>
<dbReference type="jPOST" id="P10107"/>
<dbReference type="PaxDb" id="10090-ENSMUSP00000025561"/>
<dbReference type="ProteomicsDB" id="282127"/>
<dbReference type="Antibodypedia" id="2190">
    <property type="antibodies" value="1299 antibodies from 52 providers"/>
</dbReference>
<dbReference type="DNASU" id="16952"/>
<dbReference type="Ensembl" id="ENSMUST00000025561.8">
    <property type="protein sequence ID" value="ENSMUSP00000025561.8"/>
    <property type="gene ID" value="ENSMUSG00000024659.16"/>
</dbReference>
<dbReference type="Ensembl" id="ENSMUST00000235280.2">
    <property type="protein sequence ID" value="ENSMUSP00000158305.2"/>
    <property type="gene ID" value="ENSMUSG00000024659.16"/>
</dbReference>
<dbReference type="GeneID" id="16952"/>
<dbReference type="KEGG" id="mmu:16952"/>
<dbReference type="UCSC" id="uc008gyi.1">
    <property type="organism name" value="mouse"/>
</dbReference>
<dbReference type="AGR" id="MGI:96819"/>
<dbReference type="CTD" id="301"/>
<dbReference type="MGI" id="MGI:96819">
    <property type="gene designation" value="Anxa1"/>
</dbReference>
<dbReference type="VEuPathDB" id="HostDB:ENSMUSG00000024659"/>
<dbReference type="eggNOG" id="KOG0819">
    <property type="taxonomic scope" value="Eukaryota"/>
</dbReference>
<dbReference type="GeneTree" id="ENSGT00940000155221"/>
<dbReference type="HOGENOM" id="CLU_025300_0_0_1"/>
<dbReference type="InParanoid" id="P10107"/>
<dbReference type="OMA" id="FMENQEQ"/>
<dbReference type="OrthoDB" id="37886at2759"/>
<dbReference type="PhylomeDB" id="P10107"/>
<dbReference type="TreeFam" id="TF105452"/>
<dbReference type="Reactome" id="R-MMU-416476">
    <property type="pathway name" value="G alpha (q) signalling events"/>
</dbReference>
<dbReference type="Reactome" id="R-MMU-418594">
    <property type="pathway name" value="G alpha (i) signalling events"/>
</dbReference>
<dbReference type="Reactome" id="R-MMU-444473">
    <property type="pathway name" value="Formyl peptide receptors bind formyl peptides and many other ligands"/>
</dbReference>
<dbReference type="BioGRID-ORCS" id="16952">
    <property type="hits" value="2 hits in 78 CRISPR screens"/>
</dbReference>
<dbReference type="ChiTaRS" id="Anxa1">
    <property type="organism name" value="mouse"/>
</dbReference>
<dbReference type="PRO" id="PR:P10107"/>
<dbReference type="Proteomes" id="UP000000589">
    <property type="component" value="Chromosome 19"/>
</dbReference>
<dbReference type="RNAct" id="P10107">
    <property type="molecule type" value="protein"/>
</dbReference>
<dbReference type="Bgee" id="ENSMUSG00000024659">
    <property type="expression patterns" value="Expressed in stroma of bone marrow and 234 other cell types or tissues"/>
</dbReference>
<dbReference type="ExpressionAtlas" id="P10107">
    <property type="expression patterns" value="baseline and differential"/>
</dbReference>
<dbReference type="GO" id="GO:0005884">
    <property type="term" value="C:actin filament"/>
    <property type="evidence" value="ECO:0007669"/>
    <property type="project" value="Ensembl"/>
</dbReference>
<dbReference type="GO" id="GO:0016324">
    <property type="term" value="C:apical plasma membrane"/>
    <property type="evidence" value="ECO:0000314"/>
    <property type="project" value="UniProtKB"/>
</dbReference>
<dbReference type="GO" id="GO:0016323">
    <property type="term" value="C:basolateral plasma membrane"/>
    <property type="evidence" value="ECO:0007669"/>
    <property type="project" value="UniProtKB-SubCell"/>
</dbReference>
<dbReference type="GO" id="GO:0009986">
    <property type="term" value="C:cell surface"/>
    <property type="evidence" value="ECO:0007669"/>
    <property type="project" value="Ensembl"/>
</dbReference>
<dbReference type="GO" id="GO:0062023">
    <property type="term" value="C:collagen-containing extracellular matrix"/>
    <property type="evidence" value="ECO:0007005"/>
    <property type="project" value="BHF-UCL"/>
</dbReference>
<dbReference type="GO" id="GO:0001533">
    <property type="term" value="C:cornified envelope"/>
    <property type="evidence" value="ECO:0000314"/>
    <property type="project" value="MGI"/>
</dbReference>
<dbReference type="GO" id="GO:0005737">
    <property type="term" value="C:cytoplasm"/>
    <property type="evidence" value="ECO:0000314"/>
    <property type="project" value="UniProtKB"/>
</dbReference>
<dbReference type="GO" id="GO:0005829">
    <property type="term" value="C:cytosol"/>
    <property type="evidence" value="ECO:0000304"/>
    <property type="project" value="Reactome"/>
</dbReference>
<dbReference type="GO" id="GO:0031901">
    <property type="term" value="C:early endosome membrane"/>
    <property type="evidence" value="ECO:0000250"/>
    <property type="project" value="UniProtKB"/>
</dbReference>
<dbReference type="GO" id="GO:0070062">
    <property type="term" value="C:extracellular exosome"/>
    <property type="evidence" value="ECO:0000250"/>
    <property type="project" value="UniProtKB"/>
</dbReference>
<dbReference type="GO" id="GO:0005615">
    <property type="term" value="C:extracellular space"/>
    <property type="evidence" value="ECO:0000250"/>
    <property type="project" value="UniProtKB"/>
</dbReference>
<dbReference type="GO" id="GO:0016328">
    <property type="term" value="C:lateral plasma membrane"/>
    <property type="evidence" value="ECO:0000314"/>
    <property type="project" value="UniProtKB"/>
</dbReference>
<dbReference type="GO" id="GO:0031514">
    <property type="term" value="C:motile cilium"/>
    <property type="evidence" value="ECO:0000314"/>
    <property type="project" value="UniProtKB"/>
</dbReference>
<dbReference type="GO" id="GO:0005654">
    <property type="term" value="C:nucleoplasm"/>
    <property type="evidence" value="ECO:0007669"/>
    <property type="project" value="Ensembl"/>
</dbReference>
<dbReference type="GO" id="GO:0005634">
    <property type="term" value="C:nucleus"/>
    <property type="evidence" value="ECO:0000250"/>
    <property type="project" value="UniProtKB"/>
</dbReference>
<dbReference type="GO" id="GO:0001891">
    <property type="term" value="C:phagocytic cup"/>
    <property type="evidence" value="ECO:0007669"/>
    <property type="project" value="UniProtKB-SubCell"/>
</dbReference>
<dbReference type="GO" id="GO:0005886">
    <property type="term" value="C:plasma membrane"/>
    <property type="evidence" value="ECO:0000315"/>
    <property type="project" value="CACAO"/>
</dbReference>
<dbReference type="GO" id="GO:0042383">
    <property type="term" value="C:sarcolemma"/>
    <property type="evidence" value="ECO:0000314"/>
    <property type="project" value="MGI"/>
</dbReference>
<dbReference type="GO" id="GO:0005509">
    <property type="term" value="F:calcium ion binding"/>
    <property type="evidence" value="ECO:0000250"/>
    <property type="project" value="UniProtKB"/>
</dbReference>
<dbReference type="GO" id="GO:0005544">
    <property type="term" value="F:calcium-dependent phospholipid binding"/>
    <property type="evidence" value="ECO:0000250"/>
    <property type="project" value="UniProtKB"/>
</dbReference>
<dbReference type="GO" id="GO:0048306">
    <property type="term" value="F:calcium-dependent protein binding"/>
    <property type="evidence" value="ECO:0007669"/>
    <property type="project" value="Ensembl"/>
</dbReference>
<dbReference type="GO" id="GO:0019834">
    <property type="term" value="F:phospholipase A2 inhibitor activity"/>
    <property type="evidence" value="ECO:0007669"/>
    <property type="project" value="UniProtKB-KW"/>
</dbReference>
<dbReference type="GO" id="GO:0030036">
    <property type="term" value="P:actin cytoskeleton organization"/>
    <property type="evidence" value="ECO:0000250"/>
    <property type="project" value="UniProtKB"/>
</dbReference>
<dbReference type="GO" id="GO:0002250">
    <property type="term" value="P:adaptive immune response"/>
    <property type="evidence" value="ECO:0007669"/>
    <property type="project" value="UniProtKB-KW"/>
</dbReference>
<dbReference type="GO" id="GO:0046632">
    <property type="term" value="P:alpha-beta T cell differentiation"/>
    <property type="evidence" value="ECO:0000315"/>
    <property type="project" value="BHF-UCL"/>
</dbReference>
<dbReference type="GO" id="GO:0050482">
    <property type="term" value="P:arachidonate secretion"/>
    <property type="evidence" value="ECO:0000315"/>
    <property type="project" value="MGI"/>
</dbReference>
<dbReference type="GO" id="GO:0071385">
    <property type="term" value="P:cellular response to glucocorticoid stimulus"/>
    <property type="evidence" value="ECO:0000315"/>
    <property type="project" value="UniProtKB"/>
</dbReference>
<dbReference type="GO" id="GO:0035924">
    <property type="term" value="P:cellular response to vascular endothelial growth factor stimulus"/>
    <property type="evidence" value="ECO:0007669"/>
    <property type="project" value="Ensembl"/>
</dbReference>
<dbReference type="GO" id="GO:0007187">
    <property type="term" value="P:G protein-coupled receptor signaling pathway, coupled to cyclic nucleotide second messenger"/>
    <property type="evidence" value="ECO:0000250"/>
    <property type="project" value="UniProtKB"/>
</dbReference>
<dbReference type="GO" id="GO:0071621">
    <property type="term" value="P:granulocyte chemotaxis"/>
    <property type="evidence" value="ECO:0000250"/>
    <property type="project" value="UniProtKB"/>
</dbReference>
<dbReference type="GO" id="GO:0006954">
    <property type="term" value="P:inflammatory response"/>
    <property type="evidence" value="ECO:0000315"/>
    <property type="project" value="UniProtKB"/>
</dbReference>
<dbReference type="GO" id="GO:0045087">
    <property type="term" value="P:innate immune response"/>
    <property type="evidence" value="ECO:0007669"/>
    <property type="project" value="UniProtKB-KW"/>
</dbReference>
<dbReference type="GO" id="GO:0030216">
    <property type="term" value="P:keratinocyte differentiation"/>
    <property type="evidence" value="ECO:0007669"/>
    <property type="project" value="Ensembl"/>
</dbReference>
<dbReference type="GO" id="GO:0002548">
    <property type="term" value="P:monocyte chemotaxis"/>
    <property type="evidence" value="ECO:0000250"/>
    <property type="project" value="UniProtKB"/>
</dbReference>
<dbReference type="GO" id="GO:0014839">
    <property type="term" value="P:myoblast migration involved in skeletal muscle regeneration"/>
    <property type="evidence" value="ECO:0000314"/>
    <property type="project" value="CACAO"/>
</dbReference>
<dbReference type="GO" id="GO:0045920">
    <property type="term" value="P:negative regulation of exocytosis"/>
    <property type="evidence" value="ECO:0000250"/>
    <property type="project" value="UniProtKB"/>
</dbReference>
<dbReference type="GO" id="GO:0032717">
    <property type="term" value="P:negative regulation of interleukin-8 production"/>
    <property type="evidence" value="ECO:0007669"/>
    <property type="project" value="Ensembl"/>
</dbReference>
<dbReference type="GO" id="GO:0045629">
    <property type="term" value="P:negative regulation of T-helper 2 cell differentiation"/>
    <property type="evidence" value="ECO:0000250"/>
    <property type="project" value="UniProtKB"/>
</dbReference>
<dbReference type="GO" id="GO:0042119">
    <property type="term" value="P:neutrophil activation"/>
    <property type="evidence" value="ECO:0000250"/>
    <property type="project" value="UniProtKB"/>
</dbReference>
<dbReference type="GO" id="GO:0097350">
    <property type="term" value="P:neutrophil clearance"/>
    <property type="evidence" value="ECO:0007669"/>
    <property type="project" value="Ensembl"/>
</dbReference>
<dbReference type="GO" id="GO:0001780">
    <property type="term" value="P:neutrophil homeostasis"/>
    <property type="evidence" value="ECO:0000315"/>
    <property type="project" value="BHF-UCL"/>
</dbReference>
<dbReference type="GO" id="GO:0006909">
    <property type="term" value="P:phagocytosis"/>
    <property type="evidence" value="ECO:0000315"/>
    <property type="project" value="UniProtKB"/>
</dbReference>
<dbReference type="GO" id="GO:0090050">
    <property type="term" value="P:positive regulation of cell migration involved in sprouting angiogenesis"/>
    <property type="evidence" value="ECO:0007669"/>
    <property type="project" value="Ensembl"/>
</dbReference>
<dbReference type="GO" id="GO:1900087">
    <property type="term" value="P:positive regulation of G1/S transition of mitotic cell cycle"/>
    <property type="evidence" value="ECO:0000315"/>
    <property type="project" value="MGI"/>
</dbReference>
<dbReference type="GO" id="GO:0032743">
    <property type="term" value="P:positive regulation of interleukin-2 production"/>
    <property type="evidence" value="ECO:0000250"/>
    <property type="project" value="UniProtKB"/>
</dbReference>
<dbReference type="GO" id="GO:0033031">
    <property type="term" value="P:positive regulation of neutrophil apoptotic process"/>
    <property type="evidence" value="ECO:0000315"/>
    <property type="project" value="BHF-UCL"/>
</dbReference>
<dbReference type="GO" id="GO:0042102">
    <property type="term" value="P:positive regulation of T cell proliferation"/>
    <property type="evidence" value="ECO:0000250"/>
    <property type="project" value="UniProtKB"/>
</dbReference>
<dbReference type="GO" id="GO:0045627">
    <property type="term" value="P:positive regulation of T-helper 1 cell differentiation"/>
    <property type="evidence" value="ECO:0000250"/>
    <property type="project" value="UniProtKB"/>
</dbReference>
<dbReference type="GO" id="GO:0031340">
    <property type="term" value="P:positive regulation of vesicle fusion"/>
    <property type="evidence" value="ECO:0007669"/>
    <property type="project" value="Ensembl"/>
</dbReference>
<dbReference type="GO" id="GO:0090303">
    <property type="term" value="P:positive regulation of wound healing"/>
    <property type="evidence" value="ECO:0000250"/>
    <property type="project" value="UniProtKB"/>
</dbReference>
<dbReference type="GO" id="GO:0042127">
    <property type="term" value="P:regulation of cell population proliferation"/>
    <property type="evidence" value="ECO:0000315"/>
    <property type="project" value="MGI"/>
</dbReference>
<dbReference type="GO" id="GO:0008360">
    <property type="term" value="P:regulation of cell shape"/>
    <property type="evidence" value="ECO:0000250"/>
    <property type="project" value="UniProtKB"/>
</dbReference>
<dbReference type="GO" id="GO:0046883">
    <property type="term" value="P:regulation of hormone secretion"/>
    <property type="evidence" value="ECO:0000250"/>
    <property type="project" value="UniProtKB"/>
</dbReference>
<dbReference type="GO" id="GO:0050727">
    <property type="term" value="P:regulation of inflammatory response"/>
    <property type="evidence" value="ECO:0000315"/>
    <property type="project" value="UniProtKB"/>
</dbReference>
<dbReference type="GO" id="GO:0032652">
    <property type="term" value="P:regulation of interleukin-1 production"/>
    <property type="evidence" value="ECO:0000315"/>
    <property type="project" value="UniProtKB"/>
</dbReference>
<dbReference type="GO" id="GO:0002685">
    <property type="term" value="P:regulation of leukocyte migration"/>
    <property type="evidence" value="ECO:0000315"/>
    <property type="project" value="UniProtKB"/>
</dbReference>
<dbReference type="GO" id="GO:0007165">
    <property type="term" value="P:signal transduction"/>
    <property type="evidence" value="ECO:0000315"/>
    <property type="project" value="MGI"/>
</dbReference>
<dbReference type="FunFam" id="1.10.220.10:FF:000001">
    <property type="entry name" value="Annexin"/>
    <property type="match status" value="1"/>
</dbReference>
<dbReference type="FunFam" id="1.10.220.10:FF:000002">
    <property type="entry name" value="Annexin"/>
    <property type="match status" value="1"/>
</dbReference>
<dbReference type="FunFam" id="1.10.220.10:FF:000003">
    <property type="entry name" value="Annexin"/>
    <property type="match status" value="1"/>
</dbReference>
<dbReference type="FunFam" id="1.10.220.10:FF:000007">
    <property type="entry name" value="Annexin"/>
    <property type="match status" value="1"/>
</dbReference>
<dbReference type="Gene3D" id="1.10.220.10">
    <property type="entry name" value="Annexin"/>
    <property type="match status" value="4"/>
</dbReference>
<dbReference type="InterPro" id="IPR001464">
    <property type="entry name" value="Annexin"/>
</dbReference>
<dbReference type="InterPro" id="IPR018502">
    <property type="entry name" value="Annexin_repeat"/>
</dbReference>
<dbReference type="InterPro" id="IPR018252">
    <property type="entry name" value="Annexin_repeat_CS"/>
</dbReference>
<dbReference type="InterPro" id="IPR037104">
    <property type="entry name" value="Annexin_sf"/>
</dbReference>
<dbReference type="InterPro" id="IPR002388">
    <property type="entry name" value="ANX1"/>
</dbReference>
<dbReference type="PANTHER" id="PTHR10502">
    <property type="entry name" value="ANNEXIN"/>
    <property type="match status" value="1"/>
</dbReference>
<dbReference type="PANTHER" id="PTHR10502:SF17">
    <property type="entry name" value="ANNEXIN A1"/>
    <property type="match status" value="1"/>
</dbReference>
<dbReference type="Pfam" id="PF00191">
    <property type="entry name" value="Annexin"/>
    <property type="match status" value="4"/>
</dbReference>
<dbReference type="PRINTS" id="PR00196">
    <property type="entry name" value="ANNEXIN"/>
</dbReference>
<dbReference type="PRINTS" id="PR00197">
    <property type="entry name" value="ANNEXINI"/>
</dbReference>
<dbReference type="SMART" id="SM00335">
    <property type="entry name" value="ANX"/>
    <property type="match status" value="4"/>
</dbReference>
<dbReference type="SUPFAM" id="SSF47874">
    <property type="entry name" value="Annexin"/>
    <property type="match status" value="1"/>
</dbReference>
<dbReference type="PROSITE" id="PS00223">
    <property type="entry name" value="ANNEXIN_1"/>
    <property type="match status" value="4"/>
</dbReference>
<dbReference type="PROSITE" id="PS51897">
    <property type="entry name" value="ANNEXIN_2"/>
    <property type="match status" value="4"/>
</dbReference>
<keyword id="KW-0007">Acetylation</keyword>
<keyword id="KW-1064">Adaptive immunity</keyword>
<keyword id="KW-0041">Annexin</keyword>
<keyword id="KW-0106">Calcium</keyword>
<keyword id="KW-0111">Calcium/phospholipid-binding</keyword>
<keyword id="KW-1003">Cell membrane</keyword>
<keyword id="KW-0966">Cell projection</keyword>
<keyword id="KW-0969">Cilium</keyword>
<keyword id="KW-0963">Cytoplasm</keyword>
<keyword id="KW-0968">Cytoplasmic vesicle</keyword>
<keyword id="KW-1015">Disulfide bond</keyword>
<keyword id="KW-0967">Endosome</keyword>
<keyword id="KW-0391">Immunity</keyword>
<keyword id="KW-0395">Inflammatory response</keyword>
<keyword id="KW-0399">Innate immunity</keyword>
<keyword id="KW-1017">Isopeptide bond</keyword>
<keyword id="KW-0472">Membrane</keyword>
<keyword id="KW-0479">Metal-binding</keyword>
<keyword id="KW-0539">Nucleus</keyword>
<keyword id="KW-0593">Phospholipase A2 inhibitor</keyword>
<keyword id="KW-0597">Phosphoprotein</keyword>
<keyword id="KW-1185">Reference proteome</keyword>
<keyword id="KW-0677">Repeat</keyword>
<keyword id="KW-0964">Secreted</keyword>
<keyword id="KW-0832">Ubl conjugation</keyword>
<gene>
    <name type="primary">Anxa1</name>
    <name type="synonym">Anx1</name>
    <name type="synonym">Lpc-1</name>
    <name type="synonym">Lpc1</name>
</gene>
<accession>P10107</accession>
<reference key="1">
    <citation type="journal article" date="1988" name="Nucleic Acids Res.">
        <title>Mouse lipocortin I cDNA.</title>
        <authorList>
            <person name="Sakata T."/>
            <person name="Iwagami S."/>
            <person name="Tsuruta Y."/>
            <person name="Suzuki R."/>
            <person name="Hojo K."/>
            <person name="Sato K."/>
            <person name="Teraoka H."/>
        </authorList>
    </citation>
    <scope>NUCLEOTIDE SEQUENCE [MRNA]</scope>
</reference>
<reference key="2">
    <citation type="journal article" date="1991" name="Genomics">
        <title>Mouse lipocortin I gene structure and chromosomal assignment: gene duplication and the origins of a gene family.</title>
        <authorList>
            <person name="Horlick K.R."/>
            <person name="Cheng I.C."/>
            <person name="Wong W.T."/>
            <person name="Wakeland E.K."/>
            <person name="Nick H.S."/>
        </authorList>
    </citation>
    <scope>NUCLEOTIDE SEQUENCE [MRNA]</scope>
</reference>
<reference key="3">
    <citation type="journal article" date="2004" name="Genome Res.">
        <title>The status, quality, and expansion of the NIH full-length cDNA project: the Mammalian Gene Collection (MGC).</title>
        <authorList>
            <consortium name="The MGC Project Team"/>
        </authorList>
    </citation>
    <scope>NUCLEOTIDE SEQUENCE [LARGE SCALE MRNA]</scope>
    <source>
        <strain>Czech II</strain>
        <tissue>Mammary gland</tissue>
    </source>
</reference>
<reference key="4">
    <citation type="journal article" date="1989" name="Biochem. Biophys. Res. Commun.">
        <title>cDNA-cloning, sequencing and expression in glucocorticoid-stimulated quiescent Swiss 3T3 fibroblasts of mouse lipocortin I.</title>
        <authorList>
            <person name="Philipps C."/>
            <person name="Rose-John S."/>
            <person name="Rincke G."/>
            <person name="Fuerstenberger G."/>
            <person name="Marks F."/>
        </authorList>
    </citation>
    <scope>NUCLEOTIDE SEQUENCE [MRNA] OF 6-346</scope>
    <scope>INDUCTION BY GLUCOCORTICOIDS</scope>
</reference>
<reference key="5">
    <citation type="journal article" date="2003" name="FASEB J.">
        <title>Aberrant inflammation and resistance to glucocorticoids in annexin 1-/- mouse.</title>
        <authorList>
            <person name="Hannon R."/>
            <person name="Croxtall J.D."/>
            <person name="Getting S.J."/>
            <person name="Roviezzo F."/>
            <person name="Yona S."/>
            <person name="Paul-Clark M.J."/>
            <person name="Gavins F.N."/>
            <person name="Perretti M."/>
            <person name="Morris J.F."/>
            <person name="Buckingham J.C."/>
            <person name="Flower R.J."/>
        </authorList>
    </citation>
    <scope>DISRUPTION PHENOTYPE</scope>
    <scope>FUNCTION</scope>
    <scope>TISSUE SPECIFICITY</scope>
</reference>
<reference key="6">
    <citation type="journal article" date="2003" name="J. Biol. Chem.">
        <title>Dysferlin interacts with annexins A1 and A2 and mediates sarcolemmal wound-healing.</title>
        <authorList>
            <person name="Lennon N.J."/>
            <person name="Kho A."/>
            <person name="Bacskai B.J."/>
            <person name="Perlmutter S.L."/>
            <person name="Hyman B.T."/>
            <person name="Brown R.H. Jr."/>
        </authorList>
    </citation>
    <scope>INTERACTION WITH DYSF</scope>
    <scope>SUBCELLULAR LOCATION</scope>
    <scope>TISSUE SPECIFICITY</scope>
</reference>
<reference key="7">
    <citation type="journal article" date="2007" name="Am. J. Physiol.">
        <title>CCSP regulates cross talk between secretory cells and both ciliated cells and macrophages of the conducting airway.</title>
        <authorList>
            <person name="Reynolds S.D."/>
            <person name="Reynolds P.R."/>
            <person name="Snyder J.C."/>
            <person name="Whyte F."/>
            <person name="Paavola K.J."/>
            <person name="Stripp B.R."/>
        </authorList>
    </citation>
    <scope>SUBCELLULAR LOCATION</scope>
    <scope>IDENTIFICATION BY MASS SPECTROMETRY</scope>
    <scope>TISSUE SPECIFICITY</scope>
</reference>
<reference key="8">
    <citation type="journal article" date="2007" name="Eur. J. Immunol.">
        <title>Impaired T cell activation and increased Th2 lineage commitment in Annexin-1-deficient T cells.</title>
        <authorList>
            <person name="D'Acquisto F."/>
            <person name="Paschalidis N."/>
            <person name="Sampaio A.L."/>
            <person name="Merghani A."/>
            <person name="Flower R.J."/>
            <person name="Perretti M."/>
        </authorList>
    </citation>
    <scope>DISRUPTION PHENOTYPE</scope>
    <scope>FUNCTION</scope>
</reference>
<reference key="9">
    <citation type="journal article" date="2008" name="Br. J. Pharmacol.">
        <title>Annexin-A1: a pivotal regulator of the innate and adaptive immune systems.</title>
        <authorList>
            <person name="D'Acquisto F."/>
            <person name="Perretti M."/>
            <person name="Flower R.J."/>
        </authorList>
    </citation>
    <scope>REVIEW</scope>
</reference>
<reference key="10">
    <citation type="journal article" date="2008" name="J. Immunol.">
        <title>Annexin A1 regulates intestinal mucosal injury, inflammation, and repair.</title>
        <authorList>
            <person name="Babbin B.A."/>
            <person name="Laukoetter M.G."/>
            <person name="Nava P."/>
            <person name="Koch S."/>
            <person name="Lee W.Y."/>
            <person name="Capaldo C.T."/>
            <person name="Peatman E."/>
            <person name="Severson E.A."/>
            <person name="Flower R.J."/>
            <person name="Perretti M."/>
            <person name="Parkos C.A."/>
            <person name="Nusrat A."/>
        </authorList>
    </citation>
    <scope>DISRUPTION PHENOTYPE</scope>
    <scope>SUBCELLULAR LOCATION</scope>
    <scope>TISSUE SPECIFICITY</scope>
</reference>
<reference key="11">
    <citation type="journal article" date="2009" name="Mol. Cell. Proteomics">
        <title>Large scale localization of protein phosphorylation by use of electron capture dissociation mass spectrometry.</title>
        <authorList>
            <person name="Sweet S.M."/>
            <person name="Bailey C.M."/>
            <person name="Cunningham D.L."/>
            <person name="Heath J.K."/>
            <person name="Cooper H.J."/>
        </authorList>
    </citation>
    <scope>PHOSPHORYLATION [LARGE SCALE ANALYSIS] AT TYR-21</scope>
    <scope>IDENTIFICATION BY MASS SPECTROMETRY [LARGE SCALE ANALYSIS]</scope>
    <source>
        <tissue>Embryonic fibroblast</tissue>
    </source>
</reference>
<reference key="12">
    <citation type="journal article" date="2009" name="Nat. Rev. Immunol.">
        <title>Annexin A1 and glucocorticoids as effectors of the resolution of inflammation.</title>
        <authorList>
            <person name="Perretti M."/>
            <person name="D'Acquisto F."/>
        </authorList>
    </citation>
    <scope>REVIEW</scope>
</reference>
<reference key="13">
    <citation type="journal article" date="2010" name="Cell">
        <title>A tissue-specific atlas of mouse protein phosphorylation and expression.</title>
        <authorList>
            <person name="Huttlin E.L."/>
            <person name="Jedrychowski M.P."/>
            <person name="Elias J.E."/>
            <person name="Goswami T."/>
            <person name="Rad R."/>
            <person name="Beausoleil S.A."/>
            <person name="Villen J."/>
            <person name="Haas W."/>
            <person name="Sowa M.E."/>
            <person name="Gygi S.P."/>
        </authorList>
    </citation>
    <scope>IDENTIFICATION BY MASS SPECTROMETRY [LARGE SCALE ANALYSIS]</scope>
    <source>
        <tissue>Brain</tissue>
        <tissue>Brown adipose tissue</tissue>
        <tissue>Heart</tissue>
        <tissue>Kidney</tissue>
        <tissue>Liver</tissue>
        <tissue>Lung</tissue>
        <tissue>Pancreas</tissue>
        <tissue>Spleen</tissue>
        <tissue>Testis</tissue>
    </source>
</reference>
<reference key="14">
    <citation type="journal article" date="2011" name="J. Cell Sci.">
        <title>Annexin A1 is a new functional linker between actin filaments and phagosomes during phagocytosis.</title>
        <authorList>
            <person name="Patel D.M."/>
            <person name="Ahmad S.F."/>
            <person name="Weiss D.G."/>
            <person name="Gerke V."/>
            <person name="Kuznetsov S.A."/>
        </authorList>
    </citation>
    <scope>FUNCTION</scope>
    <scope>SUBCELLULAR LOCATION</scope>
    <scope>IDENTIFICATION BY MASS SPECTROMETRY</scope>
</reference>
<reference key="15">
    <citation type="journal article" date="2013" name="Cell. Signal.">
        <title>Annexin A1 is regulated by domains cross-talk through post-translational phosphorylation and SUMOYlation.</title>
        <authorList>
            <person name="Caron D."/>
            <person name="Maaroufi H."/>
            <person name="Michaud S."/>
            <person name="Tanguay R.M."/>
            <person name="Faure R.L."/>
        </authorList>
    </citation>
    <scope>SUMOYLATION AT LYS-257</scope>
    <scope>SUBCELLULAR LOCATION</scope>
    <scope>TISSUE SPECIFICITY</scope>
    <scope>IDENTIFICATION BY MASS SPECTROMETRY</scope>
    <scope>MUTAGENESIS OF LYS-257</scope>
</reference>
<reference key="16">
    <citation type="journal article" date="2013" name="Mol. Cell">
        <title>SIRT5-mediated lysine desuccinylation impacts diverse metabolic pathways.</title>
        <authorList>
            <person name="Park J."/>
            <person name="Chen Y."/>
            <person name="Tishkoff D.X."/>
            <person name="Peng C."/>
            <person name="Tan M."/>
            <person name="Dai L."/>
            <person name="Xie Z."/>
            <person name="Zhang Y."/>
            <person name="Zwaans B.M."/>
            <person name="Skinner M.E."/>
            <person name="Lombard D.B."/>
            <person name="Zhao Y."/>
        </authorList>
    </citation>
    <scope>ACETYLATION [LARGE SCALE ANALYSIS] AT LYS-58 AND LYS-312</scope>
    <scope>IDENTIFICATION BY MASS SPECTROMETRY [LARGE SCALE ANALYSIS]</scope>
    <source>
        <tissue>Embryonic fibroblast</tissue>
    </source>
</reference>
<reference key="17">
    <citation type="journal article" date="2015" name="J. Clin. Invest.">
        <title>Annexin A1-containing extracellular vesicles and polymeric nanoparticles promote epithelial wound repair.</title>
        <authorList>
            <person name="Leoni G."/>
            <person name="Neumann P.A."/>
            <person name="Kamaly N."/>
            <person name="Quiros M."/>
            <person name="Nishio H."/>
            <person name="Jones H.R."/>
            <person name="Sumagin R."/>
            <person name="Hilgarth R.S."/>
            <person name="Alam A."/>
            <person name="Fredman G."/>
            <person name="Argyris I."/>
            <person name="Rijcken E."/>
            <person name="Kusters D."/>
            <person name="Reutelingsperger C."/>
            <person name="Perretti M."/>
            <person name="Parkos C.A."/>
            <person name="Farokhzad O.C."/>
            <person name="Neish A.S."/>
            <person name="Nusrat A."/>
        </authorList>
    </citation>
    <scope>FUNCTION</scope>
    <scope>SUBCELLULAR LOCATION</scope>
</reference>